<sequence length="380" mass="40581">MTRSGHPVTLDDLPLRADLRGKAPYGAPQLAVPVRLNTNENPHPPTRALVDDVVRSVREAAIDLHRYPDRDAVALRADLAGYLTAQTGIQLGVENIWAANGSNEILQQLLQAFGGPGRSAIGFVPSYSMHPIISDGTHTEWIEASRANDFGLDVDVAVAAVVDRKPDVVFIASPNNPSGQSVSLPDLCKLLDVAPGIAIVDEAYGEFSSQPSAVSLVEEYPSKLVVTRTMSKAFAFAGGRLGYLIATPAVIDAMLLVRLPYHLSSVTQAAARAALRHSDDTLSSVAALIAERERVTTSLNDMGFRVIPSDANFVLFGEFADAPAAWRRYLEAGILIRDVGIPGYLRATTGLAEENDAFLRASARIATDLVPVTRSPVGAP</sequence>
<evidence type="ECO:0000255" key="1">
    <source>
        <dbReference type="HAMAP-Rule" id="MF_01023"/>
    </source>
</evidence>
<gene>
    <name evidence="1" type="primary">hisC</name>
    <name type="ordered locus">JTY_1613</name>
</gene>
<name>HIS8_MYCBT</name>
<feature type="chain" id="PRO_1000149106" description="Histidinol-phosphate aminotransferase">
    <location>
        <begin position="1"/>
        <end position="380"/>
    </location>
</feature>
<feature type="modified residue" description="N6-(pyridoxal phosphate)lysine" evidence="1">
    <location>
        <position position="232"/>
    </location>
</feature>
<dbReference type="EC" id="2.6.1.9" evidence="1"/>
<dbReference type="EMBL" id="AP010918">
    <property type="protein sequence ID" value="BAH25901.1"/>
    <property type="molecule type" value="Genomic_DNA"/>
</dbReference>
<dbReference type="RefSeq" id="WP_003407947.1">
    <property type="nucleotide sequence ID" value="NZ_CP014566.1"/>
</dbReference>
<dbReference type="SMR" id="C1ANM2"/>
<dbReference type="KEGG" id="mbt:JTY_1613"/>
<dbReference type="HOGENOM" id="CLU_017584_3_1_11"/>
<dbReference type="UniPathway" id="UPA00031">
    <property type="reaction ID" value="UER00012"/>
</dbReference>
<dbReference type="GO" id="GO:0004400">
    <property type="term" value="F:histidinol-phosphate transaminase activity"/>
    <property type="evidence" value="ECO:0007669"/>
    <property type="project" value="UniProtKB-UniRule"/>
</dbReference>
<dbReference type="GO" id="GO:0030170">
    <property type="term" value="F:pyridoxal phosphate binding"/>
    <property type="evidence" value="ECO:0007669"/>
    <property type="project" value="InterPro"/>
</dbReference>
<dbReference type="GO" id="GO:0000105">
    <property type="term" value="P:L-histidine biosynthetic process"/>
    <property type="evidence" value="ECO:0007669"/>
    <property type="project" value="UniProtKB-UniRule"/>
</dbReference>
<dbReference type="CDD" id="cd00609">
    <property type="entry name" value="AAT_like"/>
    <property type="match status" value="1"/>
</dbReference>
<dbReference type="FunFam" id="3.40.640.10:FF:000138">
    <property type="entry name" value="Histidinol-phosphate aminotransferase"/>
    <property type="match status" value="1"/>
</dbReference>
<dbReference type="Gene3D" id="3.90.1150.10">
    <property type="entry name" value="Aspartate Aminotransferase, domain 1"/>
    <property type="match status" value="1"/>
</dbReference>
<dbReference type="Gene3D" id="3.40.640.10">
    <property type="entry name" value="Type I PLP-dependent aspartate aminotransferase-like (Major domain)"/>
    <property type="match status" value="1"/>
</dbReference>
<dbReference type="HAMAP" id="MF_01023">
    <property type="entry name" value="HisC_aminotrans_2"/>
    <property type="match status" value="1"/>
</dbReference>
<dbReference type="InterPro" id="IPR001917">
    <property type="entry name" value="Aminotrans_II_pyridoxalP_BS"/>
</dbReference>
<dbReference type="InterPro" id="IPR004839">
    <property type="entry name" value="Aminotransferase_I/II_large"/>
</dbReference>
<dbReference type="InterPro" id="IPR005861">
    <property type="entry name" value="HisP_aminotrans"/>
</dbReference>
<dbReference type="InterPro" id="IPR015424">
    <property type="entry name" value="PyrdxlP-dep_Trfase"/>
</dbReference>
<dbReference type="InterPro" id="IPR015421">
    <property type="entry name" value="PyrdxlP-dep_Trfase_major"/>
</dbReference>
<dbReference type="InterPro" id="IPR015422">
    <property type="entry name" value="PyrdxlP-dep_Trfase_small"/>
</dbReference>
<dbReference type="NCBIfam" id="TIGR01141">
    <property type="entry name" value="hisC"/>
    <property type="match status" value="1"/>
</dbReference>
<dbReference type="NCBIfam" id="NF002877">
    <property type="entry name" value="PRK03317.1"/>
    <property type="match status" value="1"/>
</dbReference>
<dbReference type="PANTHER" id="PTHR42885:SF2">
    <property type="entry name" value="HISTIDINOL-PHOSPHATE AMINOTRANSFERASE"/>
    <property type="match status" value="1"/>
</dbReference>
<dbReference type="PANTHER" id="PTHR42885">
    <property type="entry name" value="HISTIDINOL-PHOSPHATE AMINOTRANSFERASE-RELATED"/>
    <property type="match status" value="1"/>
</dbReference>
<dbReference type="Pfam" id="PF00155">
    <property type="entry name" value="Aminotran_1_2"/>
    <property type="match status" value="1"/>
</dbReference>
<dbReference type="SUPFAM" id="SSF53383">
    <property type="entry name" value="PLP-dependent transferases"/>
    <property type="match status" value="1"/>
</dbReference>
<dbReference type="PROSITE" id="PS00599">
    <property type="entry name" value="AA_TRANSFER_CLASS_2"/>
    <property type="match status" value="1"/>
</dbReference>
<accession>C1ANM2</accession>
<comment type="catalytic activity">
    <reaction evidence="1">
        <text>L-histidinol phosphate + 2-oxoglutarate = 3-(imidazol-4-yl)-2-oxopropyl phosphate + L-glutamate</text>
        <dbReference type="Rhea" id="RHEA:23744"/>
        <dbReference type="ChEBI" id="CHEBI:16810"/>
        <dbReference type="ChEBI" id="CHEBI:29985"/>
        <dbReference type="ChEBI" id="CHEBI:57766"/>
        <dbReference type="ChEBI" id="CHEBI:57980"/>
        <dbReference type="EC" id="2.6.1.9"/>
    </reaction>
</comment>
<comment type="cofactor">
    <cofactor evidence="1">
        <name>pyridoxal 5'-phosphate</name>
        <dbReference type="ChEBI" id="CHEBI:597326"/>
    </cofactor>
</comment>
<comment type="pathway">
    <text evidence="1">Amino-acid biosynthesis; L-histidine biosynthesis; L-histidine from 5-phospho-alpha-D-ribose 1-diphosphate: step 7/9.</text>
</comment>
<comment type="subunit">
    <text evidence="1">Homodimer.</text>
</comment>
<comment type="similarity">
    <text evidence="1">Belongs to the class-II pyridoxal-phosphate-dependent aminotransferase family. Histidinol-phosphate aminotransferase subfamily.</text>
</comment>
<organism>
    <name type="scientific">Mycobacterium bovis (strain BCG / Tokyo 172 / ATCC 35737 / TMC 1019)</name>
    <dbReference type="NCBI Taxonomy" id="561275"/>
    <lineage>
        <taxon>Bacteria</taxon>
        <taxon>Bacillati</taxon>
        <taxon>Actinomycetota</taxon>
        <taxon>Actinomycetes</taxon>
        <taxon>Mycobacteriales</taxon>
        <taxon>Mycobacteriaceae</taxon>
        <taxon>Mycobacterium</taxon>
        <taxon>Mycobacterium tuberculosis complex</taxon>
    </lineage>
</organism>
<reference key="1">
    <citation type="journal article" date="2009" name="Vaccine">
        <title>Whole genome sequence analysis of Mycobacterium bovis bacillus Calmette-Guerin (BCG) Tokyo 172: a comparative study of BCG vaccine substrains.</title>
        <authorList>
            <person name="Seki M."/>
            <person name="Honda I."/>
            <person name="Fujita I."/>
            <person name="Yano I."/>
            <person name="Yamamoto S."/>
            <person name="Koyama A."/>
        </authorList>
    </citation>
    <scope>NUCLEOTIDE SEQUENCE [LARGE SCALE GENOMIC DNA]</scope>
    <source>
        <strain>BCG / Tokyo 172 / ATCC 35737 / TMC 1019</strain>
    </source>
</reference>
<protein>
    <recommendedName>
        <fullName evidence="1">Histidinol-phosphate aminotransferase</fullName>
        <ecNumber evidence="1">2.6.1.9</ecNumber>
    </recommendedName>
    <alternativeName>
        <fullName evidence="1">Imidazole acetol-phosphate transaminase</fullName>
    </alternativeName>
</protein>
<proteinExistence type="inferred from homology"/>
<keyword id="KW-0028">Amino-acid biosynthesis</keyword>
<keyword id="KW-0032">Aminotransferase</keyword>
<keyword id="KW-0368">Histidine biosynthesis</keyword>
<keyword id="KW-0663">Pyridoxal phosphate</keyword>
<keyword id="KW-0808">Transferase</keyword>